<name>ISPH_BACVZ</name>
<protein>
    <recommendedName>
        <fullName evidence="1">4-hydroxy-3-methylbut-2-enyl diphosphate reductase</fullName>
        <shortName evidence="1">HMBPP reductase</shortName>
        <ecNumber evidence="1">1.17.7.4</ecNumber>
    </recommendedName>
</protein>
<accession>A7Z6T1</accession>
<comment type="function">
    <text evidence="1">Catalyzes the conversion of 1-hydroxy-2-methyl-2-(E)-butenyl 4-diphosphate (HMBPP) into a mixture of isopentenyl diphosphate (IPP) and dimethylallyl diphosphate (DMAPP). Acts in the terminal step of the DOXP/MEP pathway for isoprenoid precursor biosynthesis.</text>
</comment>
<comment type="catalytic activity">
    <reaction evidence="1">
        <text>isopentenyl diphosphate + 2 oxidized [2Fe-2S]-[ferredoxin] + H2O = (2E)-4-hydroxy-3-methylbut-2-enyl diphosphate + 2 reduced [2Fe-2S]-[ferredoxin] + 2 H(+)</text>
        <dbReference type="Rhea" id="RHEA:24488"/>
        <dbReference type="Rhea" id="RHEA-COMP:10000"/>
        <dbReference type="Rhea" id="RHEA-COMP:10001"/>
        <dbReference type="ChEBI" id="CHEBI:15377"/>
        <dbReference type="ChEBI" id="CHEBI:15378"/>
        <dbReference type="ChEBI" id="CHEBI:33737"/>
        <dbReference type="ChEBI" id="CHEBI:33738"/>
        <dbReference type="ChEBI" id="CHEBI:128753"/>
        <dbReference type="ChEBI" id="CHEBI:128769"/>
        <dbReference type="EC" id="1.17.7.4"/>
    </reaction>
</comment>
<comment type="catalytic activity">
    <reaction evidence="1">
        <text>dimethylallyl diphosphate + 2 oxidized [2Fe-2S]-[ferredoxin] + H2O = (2E)-4-hydroxy-3-methylbut-2-enyl diphosphate + 2 reduced [2Fe-2S]-[ferredoxin] + 2 H(+)</text>
        <dbReference type="Rhea" id="RHEA:24825"/>
        <dbReference type="Rhea" id="RHEA-COMP:10000"/>
        <dbReference type="Rhea" id="RHEA-COMP:10001"/>
        <dbReference type="ChEBI" id="CHEBI:15377"/>
        <dbReference type="ChEBI" id="CHEBI:15378"/>
        <dbReference type="ChEBI" id="CHEBI:33737"/>
        <dbReference type="ChEBI" id="CHEBI:33738"/>
        <dbReference type="ChEBI" id="CHEBI:57623"/>
        <dbReference type="ChEBI" id="CHEBI:128753"/>
        <dbReference type="EC" id="1.17.7.4"/>
    </reaction>
</comment>
<comment type="cofactor">
    <cofactor evidence="1">
        <name>[4Fe-4S] cluster</name>
        <dbReference type="ChEBI" id="CHEBI:49883"/>
    </cofactor>
    <text evidence="1">Binds 1 [4Fe-4S] cluster per subunit.</text>
</comment>
<comment type="pathway">
    <text evidence="1">Isoprenoid biosynthesis; dimethylallyl diphosphate biosynthesis; dimethylallyl diphosphate from (2E)-4-hydroxy-3-methylbutenyl diphosphate: step 1/1.</text>
</comment>
<comment type="pathway">
    <text evidence="1">Isoprenoid biosynthesis; isopentenyl diphosphate biosynthesis via DXP pathway; isopentenyl diphosphate from 1-deoxy-D-xylulose 5-phosphate: step 6/6.</text>
</comment>
<comment type="similarity">
    <text evidence="1">Belongs to the IspH family.</text>
</comment>
<proteinExistence type="inferred from homology"/>
<sequence>MDVIKISPRGYCYGVVDAMVIAKNASLDKTLPRPIYILGMIVHNKHVTDAFEEDGIYTLDGTNRLEILKQVEKGTVIFTAHGVSPEVRKAAEEKGLVTIDATCPDVTKTHDLIRKVKAEGYHVIYIGKKGHPEPEGAVGVAPEIVHLVETEEDVRNLDIQAEKLIVTNQTTMSQWDVHDIMESVKEKYPYVEYHQEICLATQVRQEAVSEQAKKADLTIVVGDPKSNNSNRLAQVSEEIAGTKAYRIGDISELKLEWLKDVNTVAVTAGASTPTPITKEVIRFLEQFDHNDESTWQLEHSVPLKKILPKVKIKN</sequence>
<gene>
    <name evidence="1" type="primary">ispH</name>
    <name type="ordered locus">RBAM_023470</name>
</gene>
<evidence type="ECO:0000255" key="1">
    <source>
        <dbReference type="HAMAP-Rule" id="MF_00191"/>
    </source>
</evidence>
<organism>
    <name type="scientific">Bacillus velezensis (strain DSM 23117 / BGSC 10A6 / LMG 26770 / FZB42)</name>
    <name type="common">Bacillus amyloliquefaciens subsp. plantarum</name>
    <dbReference type="NCBI Taxonomy" id="326423"/>
    <lineage>
        <taxon>Bacteria</taxon>
        <taxon>Bacillati</taxon>
        <taxon>Bacillota</taxon>
        <taxon>Bacilli</taxon>
        <taxon>Bacillales</taxon>
        <taxon>Bacillaceae</taxon>
        <taxon>Bacillus</taxon>
        <taxon>Bacillus amyloliquefaciens group</taxon>
    </lineage>
</organism>
<reference key="1">
    <citation type="journal article" date="2007" name="Nat. Biotechnol.">
        <title>Comparative analysis of the complete genome sequence of the plant growth-promoting bacterium Bacillus amyloliquefaciens FZB42.</title>
        <authorList>
            <person name="Chen X.H."/>
            <person name="Koumoutsi A."/>
            <person name="Scholz R."/>
            <person name="Eisenreich A."/>
            <person name="Schneider K."/>
            <person name="Heinemeyer I."/>
            <person name="Morgenstern B."/>
            <person name="Voss B."/>
            <person name="Hess W.R."/>
            <person name="Reva O."/>
            <person name="Junge H."/>
            <person name="Voigt B."/>
            <person name="Jungblut P.R."/>
            <person name="Vater J."/>
            <person name="Suessmuth R."/>
            <person name="Liesegang H."/>
            <person name="Strittmatter A."/>
            <person name="Gottschalk G."/>
            <person name="Borriss R."/>
        </authorList>
    </citation>
    <scope>NUCLEOTIDE SEQUENCE [LARGE SCALE GENOMIC DNA]</scope>
    <source>
        <strain>DSM 23117 / BGSC 10A6 / LMG 26770 / FZB42</strain>
    </source>
</reference>
<dbReference type="EC" id="1.17.7.4" evidence="1"/>
<dbReference type="EMBL" id="CP000560">
    <property type="protein sequence ID" value="ABS74707.1"/>
    <property type="molecule type" value="Genomic_DNA"/>
</dbReference>
<dbReference type="RefSeq" id="WP_012118007.1">
    <property type="nucleotide sequence ID" value="NC_009725.2"/>
</dbReference>
<dbReference type="SMR" id="A7Z6T1"/>
<dbReference type="GeneID" id="93081484"/>
<dbReference type="KEGG" id="bay:RBAM_023470"/>
<dbReference type="HOGENOM" id="CLU_027486_0_0_9"/>
<dbReference type="UniPathway" id="UPA00056">
    <property type="reaction ID" value="UER00097"/>
</dbReference>
<dbReference type="UniPathway" id="UPA00059">
    <property type="reaction ID" value="UER00105"/>
</dbReference>
<dbReference type="Proteomes" id="UP000001120">
    <property type="component" value="Chromosome"/>
</dbReference>
<dbReference type="GO" id="GO:0051539">
    <property type="term" value="F:4 iron, 4 sulfur cluster binding"/>
    <property type="evidence" value="ECO:0007669"/>
    <property type="project" value="UniProtKB-UniRule"/>
</dbReference>
<dbReference type="GO" id="GO:0051745">
    <property type="term" value="F:4-hydroxy-3-methylbut-2-enyl diphosphate reductase activity"/>
    <property type="evidence" value="ECO:0007669"/>
    <property type="project" value="UniProtKB-UniRule"/>
</dbReference>
<dbReference type="GO" id="GO:0046872">
    <property type="term" value="F:metal ion binding"/>
    <property type="evidence" value="ECO:0007669"/>
    <property type="project" value="UniProtKB-KW"/>
</dbReference>
<dbReference type="GO" id="GO:0050992">
    <property type="term" value="P:dimethylallyl diphosphate biosynthetic process"/>
    <property type="evidence" value="ECO:0007669"/>
    <property type="project" value="UniProtKB-UniRule"/>
</dbReference>
<dbReference type="GO" id="GO:0019288">
    <property type="term" value="P:isopentenyl diphosphate biosynthetic process, methylerythritol 4-phosphate pathway"/>
    <property type="evidence" value="ECO:0007669"/>
    <property type="project" value="UniProtKB-UniRule"/>
</dbReference>
<dbReference type="GO" id="GO:0016114">
    <property type="term" value="P:terpenoid biosynthetic process"/>
    <property type="evidence" value="ECO:0007669"/>
    <property type="project" value="UniProtKB-UniRule"/>
</dbReference>
<dbReference type="CDD" id="cd13944">
    <property type="entry name" value="lytB_ispH"/>
    <property type="match status" value="1"/>
</dbReference>
<dbReference type="Gene3D" id="3.40.50.11270">
    <property type="match status" value="1"/>
</dbReference>
<dbReference type="Gene3D" id="3.40.1010.20">
    <property type="entry name" value="4-hydroxy-3-methylbut-2-enyl diphosphate reductase, catalytic domain"/>
    <property type="match status" value="2"/>
</dbReference>
<dbReference type="HAMAP" id="MF_00191">
    <property type="entry name" value="IspH"/>
    <property type="match status" value="1"/>
</dbReference>
<dbReference type="InterPro" id="IPR003451">
    <property type="entry name" value="LytB/IspH"/>
</dbReference>
<dbReference type="NCBIfam" id="TIGR00216">
    <property type="entry name" value="ispH_lytB"/>
    <property type="match status" value="1"/>
</dbReference>
<dbReference type="NCBIfam" id="NF002187">
    <property type="entry name" value="PRK01045.1-1"/>
    <property type="match status" value="1"/>
</dbReference>
<dbReference type="PANTHER" id="PTHR30426">
    <property type="entry name" value="4-HYDROXY-3-METHYLBUT-2-ENYL DIPHOSPHATE REDUCTASE"/>
    <property type="match status" value="1"/>
</dbReference>
<dbReference type="PANTHER" id="PTHR30426:SF0">
    <property type="entry name" value="4-HYDROXY-3-METHYLBUT-2-ENYL DIPHOSPHATE REDUCTASE"/>
    <property type="match status" value="1"/>
</dbReference>
<dbReference type="Pfam" id="PF02401">
    <property type="entry name" value="LYTB"/>
    <property type="match status" value="1"/>
</dbReference>
<feature type="chain" id="PRO_1000021086" description="4-hydroxy-3-methylbut-2-enyl diphosphate reductase">
    <location>
        <begin position="1"/>
        <end position="314"/>
    </location>
</feature>
<feature type="active site" description="Proton donor" evidence="1">
    <location>
        <position position="133"/>
    </location>
</feature>
<feature type="binding site" evidence="1">
    <location>
        <position position="12"/>
    </location>
    <ligand>
        <name>[4Fe-4S] cluster</name>
        <dbReference type="ChEBI" id="CHEBI:49883"/>
    </ligand>
</feature>
<feature type="binding site" evidence="1">
    <location>
        <position position="43"/>
    </location>
    <ligand>
        <name>(2E)-4-hydroxy-3-methylbut-2-enyl diphosphate</name>
        <dbReference type="ChEBI" id="CHEBI:128753"/>
    </ligand>
</feature>
<feature type="binding site" evidence="1">
    <location>
        <position position="43"/>
    </location>
    <ligand>
        <name>dimethylallyl diphosphate</name>
        <dbReference type="ChEBI" id="CHEBI:57623"/>
    </ligand>
</feature>
<feature type="binding site" evidence="1">
    <location>
        <position position="43"/>
    </location>
    <ligand>
        <name>isopentenyl diphosphate</name>
        <dbReference type="ChEBI" id="CHEBI:128769"/>
    </ligand>
</feature>
<feature type="binding site" evidence="1">
    <location>
        <position position="81"/>
    </location>
    <ligand>
        <name>(2E)-4-hydroxy-3-methylbut-2-enyl diphosphate</name>
        <dbReference type="ChEBI" id="CHEBI:128753"/>
    </ligand>
</feature>
<feature type="binding site" evidence="1">
    <location>
        <position position="81"/>
    </location>
    <ligand>
        <name>dimethylallyl diphosphate</name>
        <dbReference type="ChEBI" id="CHEBI:57623"/>
    </ligand>
</feature>
<feature type="binding site" evidence="1">
    <location>
        <position position="81"/>
    </location>
    <ligand>
        <name>isopentenyl diphosphate</name>
        <dbReference type="ChEBI" id="CHEBI:128769"/>
    </ligand>
</feature>
<feature type="binding site" evidence="1">
    <location>
        <position position="103"/>
    </location>
    <ligand>
        <name>[4Fe-4S] cluster</name>
        <dbReference type="ChEBI" id="CHEBI:49883"/>
    </ligand>
</feature>
<feature type="binding site" evidence="1">
    <location>
        <position position="131"/>
    </location>
    <ligand>
        <name>(2E)-4-hydroxy-3-methylbut-2-enyl diphosphate</name>
        <dbReference type="ChEBI" id="CHEBI:128753"/>
    </ligand>
</feature>
<feature type="binding site" evidence="1">
    <location>
        <position position="131"/>
    </location>
    <ligand>
        <name>dimethylallyl diphosphate</name>
        <dbReference type="ChEBI" id="CHEBI:57623"/>
    </ligand>
</feature>
<feature type="binding site" evidence="1">
    <location>
        <position position="131"/>
    </location>
    <ligand>
        <name>isopentenyl diphosphate</name>
        <dbReference type="ChEBI" id="CHEBI:128769"/>
    </ligand>
</feature>
<feature type="binding site" evidence="1">
    <location>
        <position position="170"/>
    </location>
    <ligand>
        <name>(2E)-4-hydroxy-3-methylbut-2-enyl diphosphate</name>
        <dbReference type="ChEBI" id="CHEBI:128753"/>
    </ligand>
</feature>
<feature type="binding site" evidence="1">
    <location>
        <position position="198"/>
    </location>
    <ligand>
        <name>[4Fe-4S] cluster</name>
        <dbReference type="ChEBI" id="CHEBI:49883"/>
    </ligand>
</feature>
<feature type="binding site" evidence="1">
    <location>
        <position position="226"/>
    </location>
    <ligand>
        <name>(2E)-4-hydroxy-3-methylbut-2-enyl diphosphate</name>
        <dbReference type="ChEBI" id="CHEBI:128753"/>
    </ligand>
</feature>
<feature type="binding site" evidence="1">
    <location>
        <position position="226"/>
    </location>
    <ligand>
        <name>dimethylallyl diphosphate</name>
        <dbReference type="ChEBI" id="CHEBI:57623"/>
    </ligand>
</feature>
<feature type="binding site" evidence="1">
    <location>
        <position position="226"/>
    </location>
    <ligand>
        <name>isopentenyl diphosphate</name>
        <dbReference type="ChEBI" id="CHEBI:128769"/>
    </ligand>
</feature>
<feature type="binding site" evidence="1">
    <location>
        <position position="228"/>
    </location>
    <ligand>
        <name>(2E)-4-hydroxy-3-methylbut-2-enyl diphosphate</name>
        <dbReference type="ChEBI" id="CHEBI:128753"/>
    </ligand>
</feature>
<feature type="binding site" evidence="1">
    <location>
        <position position="228"/>
    </location>
    <ligand>
        <name>dimethylallyl diphosphate</name>
        <dbReference type="ChEBI" id="CHEBI:57623"/>
    </ligand>
</feature>
<feature type="binding site" evidence="1">
    <location>
        <position position="228"/>
    </location>
    <ligand>
        <name>isopentenyl diphosphate</name>
        <dbReference type="ChEBI" id="CHEBI:128769"/>
    </ligand>
</feature>
<feature type="binding site" evidence="1">
    <location>
        <position position="271"/>
    </location>
    <ligand>
        <name>(2E)-4-hydroxy-3-methylbut-2-enyl diphosphate</name>
        <dbReference type="ChEBI" id="CHEBI:128753"/>
    </ligand>
</feature>
<feature type="binding site" evidence="1">
    <location>
        <position position="271"/>
    </location>
    <ligand>
        <name>dimethylallyl diphosphate</name>
        <dbReference type="ChEBI" id="CHEBI:57623"/>
    </ligand>
</feature>
<feature type="binding site" evidence="1">
    <location>
        <position position="271"/>
    </location>
    <ligand>
        <name>isopentenyl diphosphate</name>
        <dbReference type="ChEBI" id="CHEBI:128769"/>
    </ligand>
</feature>
<keyword id="KW-0004">4Fe-4S</keyword>
<keyword id="KW-0408">Iron</keyword>
<keyword id="KW-0411">Iron-sulfur</keyword>
<keyword id="KW-0414">Isoprene biosynthesis</keyword>
<keyword id="KW-0479">Metal-binding</keyword>
<keyword id="KW-0560">Oxidoreductase</keyword>